<sequence>MITDPIADMIARINNAIKARKDEVSVPTSKIKEQLSEILKREGYIEDYVVSEENKKGNQGTLIIKLKYLGRRNTKPAISKIQRVSKPGLRKYVSVDEMPYVQKGLGIAILTTNKGIMTDSEARKQRLGGEIICYVW</sequence>
<gene>
    <name evidence="1" type="primary">rpsH</name>
    <name type="ordered locus">SYO3AOP1_0277</name>
</gene>
<proteinExistence type="inferred from homology"/>
<accession>B2V7J9</accession>
<reference key="1">
    <citation type="journal article" date="2009" name="J. Bacteriol.">
        <title>Complete and draft genome sequences of six members of the Aquificales.</title>
        <authorList>
            <person name="Reysenbach A.-L."/>
            <person name="Hamamura N."/>
            <person name="Podar M."/>
            <person name="Griffiths E."/>
            <person name="Ferreira S."/>
            <person name="Hochstein R."/>
            <person name="Heidelberg J."/>
            <person name="Johnson J."/>
            <person name="Mead D."/>
            <person name="Pohorille A."/>
            <person name="Sarmiento M."/>
            <person name="Schweighofer K."/>
            <person name="Seshadri R."/>
            <person name="Voytek M.A."/>
        </authorList>
    </citation>
    <scope>NUCLEOTIDE SEQUENCE [LARGE SCALE GENOMIC DNA]</scope>
    <source>
        <strain>YO3AOP1</strain>
    </source>
</reference>
<evidence type="ECO:0000255" key="1">
    <source>
        <dbReference type="HAMAP-Rule" id="MF_01302"/>
    </source>
</evidence>
<evidence type="ECO:0000305" key="2"/>
<name>RS8_SULSY</name>
<keyword id="KW-0687">Ribonucleoprotein</keyword>
<keyword id="KW-0689">Ribosomal protein</keyword>
<keyword id="KW-0694">RNA-binding</keyword>
<keyword id="KW-0699">rRNA-binding</keyword>
<protein>
    <recommendedName>
        <fullName evidence="1">Small ribosomal subunit protein uS8</fullName>
    </recommendedName>
    <alternativeName>
        <fullName evidence="2">30S ribosomal protein S8</fullName>
    </alternativeName>
</protein>
<comment type="function">
    <text evidence="1">One of the primary rRNA binding proteins, it binds directly to 16S rRNA central domain where it helps coordinate assembly of the platform of the 30S subunit.</text>
</comment>
<comment type="subunit">
    <text evidence="1">Part of the 30S ribosomal subunit. Contacts proteins S5 and S12.</text>
</comment>
<comment type="similarity">
    <text evidence="1">Belongs to the universal ribosomal protein uS8 family.</text>
</comment>
<dbReference type="EMBL" id="CP001080">
    <property type="protein sequence ID" value="ACD65922.1"/>
    <property type="molecule type" value="Genomic_DNA"/>
</dbReference>
<dbReference type="RefSeq" id="WP_012459011.1">
    <property type="nucleotide sequence ID" value="NC_010730.1"/>
</dbReference>
<dbReference type="SMR" id="B2V7J9"/>
<dbReference type="STRING" id="436114.SYO3AOP1_0277"/>
<dbReference type="KEGG" id="sul:SYO3AOP1_0277"/>
<dbReference type="eggNOG" id="COG0096">
    <property type="taxonomic scope" value="Bacteria"/>
</dbReference>
<dbReference type="HOGENOM" id="CLU_098428_0_2_0"/>
<dbReference type="GO" id="GO:1990904">
    <property type="term" value="C:ribonucleoprotein complex"/>
    <property type="evidence" value="ECO:0007669"/>
    <property type="project" value="UniProtKB-KW"/>
</dbReference>
<dbReference type="GO" id="GO:0005840">
    <property type="term" value="C:ribosome"/>
    <property type="evidence" value="ECO:0007669"/>
    <property type="project" value="UniProtKB-KW"/>
</dbReference>
<dbReference type="GO" id="GO:0019843">
    <property type="term" value="F:rRNA binding"/>
    <property type="evidence" value="ECO:0007669"/>
    <property type="project" value="UniProtKB-UniRule"/>
</dbReference>
<dbReference type="GO" id="GO:0003735">
    <property type="term" value="F:structural constituent of ribosome"/>
    <property type="evidence" value="ECO:0007669"/>
    <property type="project" value="InterPro"/>
</dbReference>
<dbReference type="GO" id="GO:0006412">
    <property type="term" value="P:translation"/>
    <property type="evidence" value="ECO:0007669"/>
    <property type="project" value="UniProtKB-UniRule"/>
</dbReference>
<dbReference type="FunFam" id="3.30.1370.30:FF:000002">
    <property type="entry name" value="30S ribosomal protein S8"/>
    <property type="match status" value="1"/>
</dbReference>
<dbReference type="FunFam" id="3.30.1490.10:FF:000001">
    <property type="entry name" value="30S ribosomal protein S8"/>
    <property type="match status" value="1"/>
</dbReference>
<dbReference type="Gene3D" id="3.30.1370.30">
    <property type="match status" value="1"/>
</dbReference>
<dbReference type="Gene3D" id="3.30.1490.10">
    <property type="match status" value="1"/>
</dbReference>
<dbReference type="HAMAP" id="MF_01302_B">
    <property type="entry name" value="Ribosomal_uS8_B"/>
    <property type="match status" value="1"/>
</dbReference>
<dbReference type="InterPro" id="IPR000630">
    <property type="entry name" value="Ribosomal_uS8"/>
</dbReference>
<dbReference type="InterPro" id="IPR047863">
    <property type="entry name" value="Ribosomal_uS8_CS"/>
</dbReference>
<dbReference type="InterPro" id="IPR035987">
    <property type="entry name" value="Ribosomal_uS8_sf"/>
</dbReference>
<dbReference type="NCBIfam" id="NF001109">
    <property type="entry name" value="PRK00136.1"/>
    <property type="match status" value="1"/>
</dbReference>
<dbReference type="PANTHER" id="PTHR11758">
    <property type="entry name" value="40S RIBOSOMAL PROTEIN S15A"/>
    <property type="match status" value="1"/>
</dbReference>
<dbReference type="Pfam" id="PF00410">
    <property type="entry name" value="Ribosomal_S8"/>
    <property type="match status" value="1"/>
</dbReference>
<dbReference type="SUPFAM" id="SSF56047">
    <property type="entry name" value="Ribosomal protein S8"/>
    <property type="match status" value="1"/>
</dbReference>
<dbReference type="PROSITE" id="PS00053">
    <property type="entry name" value="RIBOSOMAL_S8"/>
    <property type="match status" value="1"/>
</dbReference>
<feature type="chain" id="PRO_1000140623" description="Small ribosomal subunit protein uS8">
    <location>
        <begin position="1"/>
        <end position="136"/>
    </location>
</feature>
<organism>
    <name type="scientific">Sulfurihydrogenibium sp. (strain YO3AOP1)</name>
    <dbReference type="NCBI Taxonomy" id="436114"/>
    <lineage>
        <taxon>Bacteria</taxon>
        <taxon>Pseudomonadati</taxon>
        <taxon>Aquificota</taxon>
        <taxon>Aquificia</taxon>
        <taxon>Aquificales</taxon>
        <taxon>Hydrogenothermaceae</taxon>
        <taxon>Sulfurihydrogenibium</taxon>
    </lineage>
</organism>